<protein>
    <recommendedName>
        <fullName evidence="1">Large subunit GTPase 1 homolog</fullName>
        <ecNumber evidence="2">3.6.5.-</ecNumber>
    </recommendedName>
</protein>
<reference key="1">
    <citation type="submission" date="2005-11" db="EMBL/GenBank/DDBJ databases">
        <authorList>
            <consortium name="NIH - Mammalian Gene Collection (MGC) project"/>
        </authorList>
    </citation>
    <scope>NUCLEOTIDE SEQUENCE [LARGE SCALE MRNA]</scope>
    <source>
        <strain>Crossbred X Angus</strain>
        <tissue>Liver</tissue>
    </source>
</reference>
<sequence>MGRRRAPEGGTLGRALIRQQVQRSRSHRHTDSWLHTSELNDGYDWGRLNLQSVTEQSSLDDFLATAELAGTEFVAEKLNIKFVPPEARTGLLSFEENQRIKKLHEENKQFLCIPRRPKWDQKTSPEELKQAEKDNFLEWRRQLVWLEEEQNLILTPFERNLDFWRQLWRVIERSDIVVQIVDARNPLLFRCEDLECYVKTIDDNKENVILINKADLLTAEQRSAWAEFFKKENVKVIFWSALAEAIKLMGNSKGDVNGDTGEAITAEFENSSCDEAEILHKETEHLSLGEAASSEEDESEYEDCQEEEEDWQTCLEDSSSSDEEACGQDCKEGHTVDSEAQGRNTPQKRQIHNFSHLVSKQELLEVFKQLHSGKKVKDGQLTVGLVGYPNVGKSSTINTILGNKKVSVSATPGHTKHFQTLYVEPGLCLCDCPGLVMPSFVSTKAEMICSGILPIDQMRDHVPPVSLVCQNIPRHVLEATYGIDIIKPREDEDPRRPPTSEELLTAYGCMRGFMTAHGQPDQPRSARYILKDYVNGKLLYCHPPPGRDPVTFQYQHQRLLEKKVNGGEIKLQVVRNKKVYQIENVVDKAFFHQENVRALTKGVQAVMGYKPGSGLVTAAAVSSERGAGKPWKKHGNRNKKEKSRRLYKHLDM</sequence>
<dbReference type="EC" id="3.6.5.-" evidence="2"/>
<dbReference type="EMBL" id="BC110150">
    <property type="protein sequence ID" value="AAI10151.1"/>
    <property type="molecule type" value="mRNA"/>
</dbReference>
<dbReference type="RefSeq" id="NP_001039375.1">
    <property type="nucleotide sequence ID" value="NM_001045910.2"/>
</dbReference>
<dbReference type="SMR" id="Q2YDM7"/>
<dbReference type="FunCoup" id="Q2YDM7">
    <property type="interactions" value="4292"/>
</dbReference>
<dbReference type="STRING" id="9913.ENSBTAP00000058751"/>
<dbReference type="PaxDb" id="9913-ENSBTAP00000011134"/>
<dbReference type="GeneID" id="505082"/>
<dbReference type="KEGG" id="bta:505082"/>
<dbReference type="CTD" id="55341"/>
<dbReference type="eggNOG" id="KOG1424">
    <property type="taxonomic scope" value="Eukaryota"/>
</dbReference>
<dbReference type="InParanoid" id="Q2YDM7"/>
<dbReference type="OrthoDB" id="61815at2759"/>
<dbReference type="Proteomes" id="UP000009136">
    <property type="component" value="Unplaced"/>
</dbReference>
<dbReference type="GO" id="GO:0015030">
    <property type="term" value="C:Cajal body"/>
    <property type="evidence" value="ECO:0000250"/>
    <property type="project" value="UniProtKB"/>
</dbReference>
<dbReference type="GO" id="GO:0005829">
    <property type="term" value="C:cytosol"/>
    <property type="evidence" value="ECO:0000318"/>
    <property type="project" value="GO_Central"/>
</dbReference>
<dbReference type="GO" id="GO:0005783">
    <property type="term" value="C:endoplasmic reticulum"/>
    <property type="evidence" value="ECO:0000250"/>
    <property type="project" value="UniProtKB"/>
</dbReference>
<dbReference type="GO" id="GO:0005525">
    <property type="term" value="F:GTP binding"/>
    <property type="evidence" value="ECO:0000250"/>
    <property type="project" value="UniProtKB"/>
</dbReference>
<dbReference type="GO" id="GO:0003924">
    <property type="term" value="F:GTPase activity"/>
    <property type="evidence" value="ECO:0000318"/>
    <property type="project" value="GO_Central"/>
</dbReference>
<dbReference type="GO" id="GO:0051168">
    <property type="term" value="P:nuclear export"/>
    <property type="evidence" value="ECO:0000250"/>
    <property type="project" value="UniProtKB"/>
</dbReference>
<dbReference type="GO" id="GO:0015031">
    <property type="term" value="P:protein transport"/>
    <property type="evidence" value="ECO:0007669"/>
    <property type="project" value="UniProtKB-KW"/>
</dbReference>
<dbReference type="GO" id="GO:0000054">
    <property type="term" value="P:ribosomal subunit export from nucleus"/>
    <property type="evidence" value="ECO:0000318"/>
    <property type="project" value="GO_Central"/>
</dbReference>
<dbReference type="CDD" id="cd01857">
    <property type="entry name" value="HSR1_MMR1"/>
    <property type="match status" value="1"/>
</dbReference>
<dbReference type="FunFam" id="1.10.1580.10:FF:000008">
    <property type="entry name" value="Large subunit GTPase 1"/>
    <property type="match status" value="1"/>
</dbReference>
<dbReference type="Gene3D" id="3.40.50.300">
    <property type="entry name" value="P-loop containing nucleotide triphosphate hydrolases"/>
    <property type="match status" value="1"/>
</dbReference>
<dbReference type="InterPro" id="IPR030378">
    <property type="entry name" value="G_CP_dom"/>
</dbReference>
<dbReference type="InterPro" id="IPR043358">
    <property type="entry name" value="GNL1-like"/>
</dbReference>
<dbReference type="InterPro" id="IPR006073">
    <property type="entry name" value="GTP-bd"/>
</dbReference>
<dbReference type="InterPro" id="IPR027417">
    <property type="entry name" value="P-loop_NTPase"/>
</dbReference>
<dbReference type="PANTHER" id="PTHR45709:SF2">
    <property type="entry name" value="LARGE SUBUNIT GTPASE 1 HOMOLOG"/>
    <property type="match status" value="1"/>
</dbReference>
<dbReference type="PANTHER" id="PTHR45709">
    <property type="entry name" value="LARGE SUBUNIT GTPASE 1 HOMOLOG-RELATED"/>
    <property type="match status" value="1"/>
</dbReference>
<dbReference type="Pfam" id="PF01926">
    <property type="entry name" value="MMR_HSR1"/>
    <property type="match status" value="1"/>
</dbReference>
<dbReference type="PRINTS" id="PR00326">
    <property type="entry name" value="GTP1OBG"/>
</dbReference>
<dbReference type="SUPFAM" id="SSF52540">
    <property type="entry name" value="P-loop containing nucleoside triphosphate hydrolases"/>
    <property type="match status" value="1"/>
</dbReference>
<dbReference type="PROSITE" id="PS51721">
    <property type="entry name" value="G_CP"/>
    <property type="match status" value="1"/>
</dbReference>
<proteinExistence type="evidence at transcript level"/>
<gene>
    <name evidence="2" type="primary">LSG1</name>
</gene>
<organism>
    <name type="scientific">Bos taurus</name>
    <name type="common">Bovine</name>
    <dbReference type="NCBI Taxonomy" id="9913"/>
    <lineage>
        <taxon>Eukaryota</taxon>
        <taxon>Metazoa</taxon>
        <taxon>Chordata</taxon>
        <taxon>Craniata</taxon>
        <taxon>Vertebrata</taxon>
        <taxon>Euteleostomi</taxon>
        <taxon>Mammalia</taxon>
        <taxon>Eutheria</taxon>
        <taxon>Laurasiatheria</taxon>
        <taxon>Artiodactyla</taxon>
        <taxon>Ruminantia</taxon>
        <taxon>Pecora</taxon>
        <taxon>Bovidae</taxon>
        <taxon>Bovinae</taxon>
        <taxon>Bos</taxon>
    </lineage>
</organism>
<comment type="function">
    <text evidence="2">Functions as a GTPase. May act by mediating the release of NMD3 from the 60S ribosomal subunit after export into the cytoplasm during the 60S ribosomal subunit maturation.</text>
</comment>
<comment type="catalytic activity">
    <reaction evidence="2">
        <text>GTP + H2O = GDP + phosphate + H(+)</text>
        <dbReference type="Rhea" id="RHEA:19669"/>
        <dbReference type="ChEBI" id="CHEBI:15377"/>
        <dbReference type="ChEBI" id="CHEBI:15378"/>
        <dbReference type="ChEBI" id="CHEBI:37565"/>
        <dbReference type="ChEBI" id="CHEBI:43474"/>
        <dbReference type="ChEBI" id="CHEBI:58189"/>
    </reaction>
</comment>
<comment type="subcellular location">
    <subcellularLocation>
        <location evidence="2">Cytoplasm</location>
    </subcellularLocation>
    <subcellularLocation>
        <location evidence="2">Endoplasmic reticulum</location>
    </subcellularLocation>
    <subcellularLocation>
        <location evidence="2">Nucleus</location>
        <location evidence="2">Cajal body</location>
    </subcellularLocation>
    <text evidence="2">between the cytosol and Cajal bodies via a XPO1/CRM1-dependent export mechanism.</text>
</comment>
<comment type="domain">
    <text evidence="2">In contrast to other GTP-binding proteins, this family is characterized by a circular permutation of the GTPase motifs described by a G4-G1-G3 pattern.</text>
</comment>
<comment type="similarity">
    <text evidence="4">Belongs to the TRAFAC class YlqF/YawG GTPase family. LSG1 subfamily.</text>
</comment>
<name>LSG1_BOVIN</name>
<accession>Q2YDM7</accession>
<evidence type="ECO:0000250" key="1">
    <source>
        <dbReference type="UniProtKB" id="P53145"/>
    </source>
</evidence>
<evidence type="ECO:0000250" key="2">
    <source>
        <dbReference type="UniProtKB" id="Q9H089"/>
    </source>
</evidence>
<evidence type="ECO:0000255" key="3"/>
<evidence type="ECO:0000255" key="4">
    <source>
        <dbReference type="PROSITE-ProRule" id="PRU01058"/>
    </source>
</evidence>
<evidence type="ECO:0000256" key="5">
    <source>
        <dbReference type="SAM" id="MobiDB-lite"/>
    </source>
</evidence>
<keyword id="KW-0963">Cytoplasm</keyword>
<keyword id="KW-0256">Endoplasmic reticulum</keyword>
<keyword id="KW-0342">GTP-binding</keyword>
<keyword id="KW-0378">Hydrolase</keyword>
<keyword id="KW-0547">Nucleotide-binding</keyword>
<keyword id="KW-0539">Nucleus</keyword>
<keyword id="KW-0597">Phosphoprotein</keyword>
<keyword id="KW-0653">Protein transport</keyword>
<keyword id="KW-1185">Reference proteome</keyword>
<keyword id="KW-0813">Transport</keyword>
<feature type="chain" id="PRO_0000324552" description="Large subunit GTPase 1 homolog">
    <location>
        <begin position="1"/>
        <end position="652"/>
    </location>
</feature>
<feature type="domain" description="CP-type G" evidence="4">
    <location>
        <begin position="164"/>
        <end position="438"/>
    </location>
</feature>
<feature type="region of interest" description="Disordered" evidence="5">
    <location>
        <begin position="288"/>
        <end position="347"/>
    </location>
</feature>
<feature type="region of interest" description="Disordered" evidence="5">
    <location>
        <begin position="625"/>
        <end position="652"/>
    </location>
</feature>
<feature type="compositionally biased region" description="Acidic residues" evidence="5">
    <location>
        <begin position="293"/>
        <end position="311"/>
    </location>
</feature>
<feature type="compositionally biased region" description="Basic residues" evidence="5">
    <location>
        <begin position="630"/>
        <end position="652"/>
    </location>
</feature>
<feature type="binding site" evidence="3">
    <location>
        <begin position="212"/>
        <end position="215"/>
    </location>
    <ligand>
        <name>GTP</name>
        <dbReference type="ChEBI" id="CHEBI:37565"/>
    </ligand>
</feature>
<feature type="binding site" evidence="3">
    <location>
        <begin position="387"/>
        <end position="394"/>
    </location>
    <ligand>
        <name>GTP</name>
        <dbReference type="ChEBI" id="CHEBI:37565"/>
    </ligand>
</feature>
<feature type="binding site" evidence="3">
    <location>
        <begin position="431"/>
        <end position="434"/>
    </location>
    <ligand>
        <name>GTP</name>
        <dbReference type="ChEBI" id="CHEBI:37565"/>
    </ligand>
</feature>
<feature type="modified residue" description="Phosphoserine" evidence="2">
    <location>
        <position position="93"/>
    </location>
</feature>
<feature type="modified residue" description="Phosphoserine" evidence="2">
    <location>
        <position position="252"/>
    </location>
</feature>